<reference key="1">
    <citation type="journal article" date="1983" name="J. Mol. Biol.">
        <title>Complete nucleotide sequence of bacteriophage T7 DNA and the locations of T7 genetic elements.</title>
        <authorList>
            <person name="Dunn J.J."/>
            <person name="Studier F.W."/>
        </authorList>
    </citation>
    <scope>NUCLEOTIDE SEQUENCE [LARGE SCALE GENOMIC DNA]</scope>
</reference>
<reference key="2">
    <citation type="submission" date="1993-11" db="EMBL/GenBank/DDBJ databases">
        <authorList>
            <person name="Dunn J.J."/>
            <person name="Studier F.W."/>
        </authorList>
    </citation>
    <scope>SEQUENCE REVISION</scope>
</reference>
<organismHost>
    <name type="scientific">Escherichia coli</name>
    <dbReference type="NCBI Taxonomy" id="562"/>
</organismHost>
<feature type="chain" id="PRO_0000003357" description="Fusion protein 5.5/5.7">
    <location>
        <begin position="1"/>
        <end position="169"/>
    </location>
</feature>
<feature type="helix" evidence="2">
    <location>
        <begin position="102"/>
        <end position="113"/>
    </location>
</feature>
<feature type="strand" evidence="2">
    <location>
        <begin position="117"/>
        <end position="119"/>
    </location>
</feature>
<feature type="helix" evidence="2">
    <location>
        <begin position="122"/>
        <end position="125"/>
    </location>
</feature>
<feature type="helix" evidence="2">
    <location>
        <begin position="127"/>
        <end position="136"/>
    </location>
</feature>
<feature type="strand" evidence="2">
    <location>
        <begin position="140"/>
        <end position="142"/>
    </location>
</feature>
<feature type="strand" evidence="2">
    <location>
        <begin position="145"/>
        <end position="150"/>
    </location>
</feature>
<feature type="helix" evidence="2">
    <location>
        <begin position="158"/>
        <end position="164"/>
    </location>
</feature>
<protein>
    <recommendedName>
        <fullName>Fusion protein 5.5/5.7</fullName>
    </recommendedName>
</protein>
<accession>P03787</accession>
<dbReference type="EMBL" id="V01146">
    <property type="protein sequence ID" value="CAA24415.1"/>
    <property type="molecule type" value="Genomic_DNA"/>
</dbReference>
<dbReference type="EMBL" id="V01146">
    <property type="protein sequence ID" value="CAA24414.1"/>
    <property type="status" value="ALT_TERM"/>
    <property type="molecule type" value="Genomic_DNA"/>
</dbReference>
<dbReference type="EMBL" id="V01146">
    <property type="protein sequence ID" value="CAA24416.1"/>
    <property type="status" value="ALT_INIT"/>
    <property type="molecule type" value="Genomic_DNA"/>
</dbReference>
<dbReference type="PIR" id="A04412">
    <property type="entry name" value="W5BP57"/>
</dbReference>
<dbReference type="PIR" id="S42314">
    <property type="entry name" value="S42314"/>
</dbReference>
<dbReference type="RefSeq" id="NP_041984.1">
    <molecule id="P03787-1"/>
    <property type="nucleotide sequence ID" value="NC_001604.1"/>
</dbReference>
<dbReference type="RefSeq" id="NP_041985.1">
    <property type="nucleotide sequence ID" value="NC_001604.1"/>
</dbReference>
<dbReference type="RefSeq" id="NP_041986.1">
    <property type="nucleotide sequence ID" value="NC_001604.1"/>
</dbReference>
<dbReference type="PDB" id="5LGM">
    <property type="method" value="NMR"/>
    <property type="chains" value="A=101-169"/>
</dbReference>
<dbReference type="PDBsum" id="5LGM"/>
<dbReference type="BMRB" id="P03787"/>
<dbReference type="SMR" id="P03787"/>
<dbReference type="KEGG" id="vg:1261038"/>
<dbReference type="KEGG" id="vg:1261040"/>
<dbReference type="KEGG" id="vg:1261041"/>
<dbReference type="OrthoDB" id="16719at10239"/>
<dbReference type="Proteomes" id="UP000000840">
    <property type="component" value="Genome"/>
</dbReference>
<dbReference type="GO" id="GO:0075523">
    <property type="term" value="P:viral translational frameshifting"/>
    <property type="evidence" value="ECO:0007669"/>
    <property type="project" value="UniProtKB-KW"/>
</dbReference>
<dbReference type="InterPro" id="IPR022611">
    <property type="entry name" value="Phage_T7_5.5"/>
</dbReference>
<dbReference type="Pfam" id="PF11247">
    <property type="entry name" value="Phage_T7_55"/>
    <property type="match status" value="1"/>
</dbReference>
<gene>
    <name type="ordered locus">5.5</name>
</gene>
<proteinExistence type="evidence at protein level"/>
<keyword id="KW-0002">3D-structure</keyword>
<keyword id="KW-1185">Reference proteome</keyword>
<keyword id="KW-0688">Ribosomal frameshifting</keyword>
<comment type="alternative products">
    <event type="ribosomal frameshifting"/>
    <isoform>
        <id>P03787-1</id>
        <name>1</name>
        <name>Fusion protein 5.5/5.7</name>
        <sequence type="displayed"/>
    </isoform>
    <isoform>
        <id>P0DJY3-1</id>
        <name>2</name>
        <name>Protein suppressor of silencing</name>
        <sequence type="external"/>
    </isoform>
</comment>
<comment type="miscellaneous">
    <text>It is believed that a second protein is produced by a -1 frameshift during the translation of gene 5.5. This frameshift may occur anywhere within the region corresponding to residues 85-99 of the sequence shown. Thus a portion of these residues may be replaced by a portion of the segment GLFQTISCNSTGGVL in the actual gene 5.5-5.7 protein.</text>
</comment>
<comment type="sequence caution" evidence="1">
    <conflict type="erroneous initiation">
        <sequence resource="EMBL-CDS" id="CAA24416"/>
    </conflict>
</comment>
<name>V5557_BPT7</name>
<sequence length="169" mass="18713">MAMTKKFKVSFDVTAKMSSDVQAILEKDMLHLCKQVGSGAIVPNGKQKEMIVQFLTHGMEGLMTFVVRTSFREAIKDMHEEYADKDSFKQSPATVREVFLMSDYLKVLQAIKSCPKTFQSNYVRNNASLVAEAASRGHISCLTTSGRNGGAWEITASGTRFLKRMGGCV</sequence>
<evidence type="ECO:0000305" key="1"/>
<evidence type="ECO:0007829" key="2">
    <source>
        <dbReference type="PDB" id="5LGM"/>
    </source>
</evidence>
<organism>
    <name type="scientific">Escherichia phage T7</name>
    <name type="common">Bacteriophage T7</name>
    <dbReference type="NCBI Taxonomy" id="10760"/>
    <lineage>
        <taxon>Viruses</taxon>
        <taxon>Duplodnaviria</taxon>
        <taxon>Heunggongvirae</taxon>
        <taxon>Uroviricota</taxon>
        <taxon>Caudoviricetes</taxon>
        <taxon>Autographiviridae</taxon>
        <taxon>Studiervirinae</taxon>
        <taxon>Teseptimavirus</taxon>
        <taxon>Teseptimavirus T7</taxon>
    </lineage>
</organism>